<keyword id="KW-0066">ATP synthesis</keyword>
<keyword id="KW-0067">ATP-binding</keyword>
<keyword id="KW-0997">Cell inner membrane</keyword>
<keyword id="KW-1003">Cell membrane</keyword>
<keyword id="KW-0139">CF(1)</keyword>
<keyword id="KW-0375">Hydrogen ion transport</keyword>
<keyword id="KW-0406">Ion transport</keyword>
<keyword id="KW-0472">Membrane</keyword>
<keyword id="KW-0547">Nucleotide-binding</keyword>
<keyword id="KW-1185">Reference proteome</keyword>
<keyword id="KW-1278">Translocase</keyword>
<keyword id="KW-0813">Transport</keyword>
<reference key="1">
    <citation type="journal article" date="2006" name="Proc. Natl. Acad. Sci. U.S.A.">
        <title>Evolution of sensory complexity recorded in a myxobacterial genome.</title>
        <authorList>
            <person name="Goldman B.S."/>
            <person name="Nierman W.C."/>
            <person name="Kaiser D."/>
            <person name="Slater S.C."/>
            <person name="Durkin A.S."/>
            <person name="Eisen J.A."/>
            <person name="Ronning C.M."/>
            <person name="Barbazuk W.B."/>
            <person name="Blanchard M."/>
            <person name="Field C."/>
            <person name="Halling C."/>
            <person name="Hinkle G."/>
            <person name="Iartchuk O."/>
            <person name="Kim H.S."/>
            <person name="Mackenzie C."/>
            <person name="Madupu R."/>
            <person name="Miller N."/>
            <person name="Shvartsbeyn A."/>
            <person name="Sullivan S.A."/>
            <person name="Vaudin M."/>
            <person name="Wiegand R."/>
            <person name="Kaplan H.B."/>
        </authorList>
    </citation>
    <scope>NUCLEOTIDE SEQUENCE [LARGE SCALE GENOMIC DNA]</scope>
    <source>
        <strain>DK1622</strain>
    </source>
</reference>
<gene>
    <name evidence="1" type="primary">atpD</name>
    <name type="ordered locus">MXAN_6923</name>
</gene>
<comment type="function">
    <text evidence="1">Produces ATP from ADP in the presence of a proton gradient across the membrane. The catalytic sites are hosted primarily by the beta subunits.</text>
</comment>
<comment type="catalytic activity">
    <reaction evidence="1">
        <text>ATP + H2O + 4 H(+)(in) = ADP + phosphate + 5 H(+)(out)</text>
        <dbReference type="Rhea" id="RHEA:57720"/>
        <dbReference type="ChEBI" id="CHEBI:15377"/>
        <dbReference type="ChEBI" id="CHEBI:15378"/>
        <dbReference type="ChEBI" id="CHEBI:30616"/>
        <dbReference type="ChEBI" id="CHEBI:43474"/>
        <dbReference type="ChEBI" id="CHEBI:456216"/>
        <dbReference type="EC" id="7.1.2.2"/>
    </reaction>
</comment>
<comment type="subunit">
    <text evidence="1">F-type ATPases have 2 components, CF(1) - the catalytic core - and CF(0) - the membrane proton channel. CF(1) has five subunits: alpha(3), beta(3), gamma(1), delta(1), epsilon(1). CF(0) has three main subunits: a(1), b(2) and c(9-12). The alpha and beta chains form an alternating ring which encloses part of the gamma chain. CF(1) is attached to CF(0) by a central stalk formed by the gamma and epsilon chains, while a peripheral stalk is formed by the delta and b chains.</text>
</comment>
<comment type="subcellular location">
    <subcellularLocation>
        <location evidence="1">Cell inner membrane</location>
        <topology evidence="1">Peripheral membrane protein</topology>
    </subcellularLocation>
</comment>
<comment type="similarity">
    <text evidence="1">Belongs to the ATPase alpha/beta chains family.</text>
</comment>
<proteinExistence type="inferred from homology"/>
<sequence>MSAQVPTAGRIIQVLGPVVDVEFPPGGLPEVYTALKVTNANLSAAADNLTLEVAQHLGENTVRTIAMDSTEGLGRGMAVTNTGAPIQVPVGKATLGRILNVTGEPVDEMGPVKAQEYWSIHRAPPPFTEQDVRVQMFETGIKVIDLLAPYTRGGKIGLFGGAGVGKTVLLQELIRNVAVERGGFSVFAGVGERTREGNDLYHEMQDTKVIQTDNLEASQAVLVYGQMNEPPGARARVALSALTMAEYFRDVEGRDVLLFVDNIFRFTQAGSEVSALLGRIPSAVGYQPTLATEMGGLQERITSTTKGSITSVQAIYVPADDLTDPAPATAFAHLDATTVLNRSIAELAIFPAVDPLDSTSRILDPAVIGAEHYGVARKVQGILQRYKELQDIIAILGMDELSEDDKLVVARARKIQRFLSQPFFVAKVFTGKDGRYVKLQDTIQGFKEIAEGKHDDIPEGAFYMTGSIDEVVENARKLAAS</sequence>
<evidence type="ECO:0000255" key="1">
    <source>
        <dbReference type="HAMAP-Rule" id="MF_01347"/>
    </source>
</evidence>
<organism>
    <name type="scientific">Myxococcus xanthus (strain DK1622)</name>
    <dbReference type="NCBI Taxonomy" id="246197"/>
    <lineage>
        <taxon>Bacteria</taxon>
        <taxon>Pseudomonadati</taxon>
        <taxon>Myxococcota</taxon>
        <taxon>Myxococcia</taxon>
        <taxon>Myxococcales</taxon>
        <taxon>Cystobacterineae</taxon>
        <taxon>Myxococcaceae</taxon>
        <taxon>Myxococcus</taxon>
    </lineage>
</organism>
<feature type="chain" id="PRO_0000254310" description="ATP synthase subunit beta">
    <location>
        <begin position="1"/>
        <end position="481"/>
    </location>
</feature>
<feature type="binding site" evidence="1">
    <location>
        <begin position="160"/>
        <end position="167"/>
    </location>
    <ligand>
        <name>ATP</name>
        <dbReference type="ChEBI" id="CHEBI:30616"/>
    </ligand>
</feature>
<protein>
    <recommendedName>
        <fullName evidence="1">ATP synthase subunit beta</fullName>
        <ecNumber evidence="1">7.1.2.2</ecNumber>
    </recommendedName>
    <alternativeName>
        <fullName evidence="1">ATP synthase F1 sector subunit beta</fullName>
    </alternativeName>
    <alternativeName>
        <fullName evidence="1">F-ATPase subunit beta</fullName>
    </alternativeName>
</protein>
<name>ATPB_MYXXD</name>
<accession>Q1CX36</accession>
<dbReference type="EC" id="7.1.2.2" evidence="1"/>
<dbReference type="EMBL" id="CP000113">
    <property type="protein sequence ID" value="ABF88655.1"/>
    <property type="molecule type" value="Genomic_DNA"/>
</dbReference>
<dbReference type="RefSeq" id="WP_011556843.1">
    <property type="nucleotide sequence ID" value="NC_008095.1"/>
</dbReference>
<dbReference type="SMR" id="Q1CX36"/>
<dbReference type="STRING" id="246197.MXAN_6923"/>
<dbReference type="EnsemblBacteria" id="ABF88655">
    <property type="protein sequence ID" value="ABF88655"/>
    <property type="gene ID" value="MXAN_6923"/>
</dbReference>
<dbReference type="GeneID" id="41364105"/>
<dbReference type="KEGG" id="mxa:MXAN_6923"/>
<dbReference type="eggNOG" id="COG0055">
    <property type="taxonomic scope" value="Bacteria"/>
</dbReference>
<dbReference type="HOGENOM" id="CLU_022398_0_2_7"/>
<dbReference type="OrthoDB" id="9801639at2"/>
<dbReference type="Proteomes" id="UP000002402">
    <property type="component" value="Chromosome"/>
</dbReference>
<dbReference type="GO" id="GO:0005886">
    <property type="term" value="C:plasma membrane"/>
    <property type="evidence" value="ECO:0007669"/>
    <property type="project" value="UniProtKB-SubCell"/>
</dbReference>
<dbReference type="GO" id="GO:0045259">
    <property type="term" value="C:proton-transporting ATP synthase complex"/>
    <property type="evidence" value="ECO:0007669"/>
    <property type="project" value="UniProtKB-KW"/>
</dbReference>
<dbReference type="GO" id="GO:0005524">
    <property type="term" value="F:ATP binding"/>
    <property type="evidence" value="ECO:0007669"/>
    <property type="project" value="UniProtKB-UniRule"/>
</dbReference>
<dbReference type="GO" id="GO:0016887">
    <property type="term" value="F:ATP hydrolysis activity"/>
    <property type="evidence" value="ECO:0007669"/>
    <property type="project" value="InterPro"/>
</dbReference>
<dbReference type="GO" id="GO:0046933">
    <property type="term" value="F:proton-transporting ATP synthase activity, rotational mechanism"/>
    <property type="evidence" value="ECO:0007669"/>
    <property type="project" value="UniProtKB-UniRule"/>
</dbReference>
<dbReference type="CDD" id="cd18110">
    <property type="entry name" value="ATP-synt_F1_beta_C"/>
    <property type="match status" value="1"/>
</dbReference>
<dbReference type="CDD" id="cd18115">
    <property type="entry name" value="ATP-synt_F1_beta_N"/>
    <property type="match status" value="1"/>
</dbReference>
<dbReference type="CDD" id="cd01133">
    <property type="entry name" value="F1-ATPase_beta_CD"/>
    <property type="match status" value="1"/>
</dbReference>
<dbReference type="FunFam" id="1.10.1140.10:FF:000001">
    <property type="entry name" value="ATP synthase subunit beta"/>
    <property type="match status" value="1"/>
</dbReference>
<dbReference type="FunFam" id="2.40.10.170:FF:000005">
    <property type="entry name" value="ATP synthase subunit beta"/>
    <property type="match status" value="1"/>
</dbReference>
<dbReference type="FunFam" id="3.40.50.300:FF:000026">
    <property type="entry name" value="ATP synthase subunit beta"/>
    <property type="match status" value="1"/>
</dbReference>
<dbReference type="Gene3D" id="2.40.10.170">
    <property type="match status" value="1"/>
</dbReference>
<dbReference type="Gene3D" id="1.10.1140.10">
    <property type="entry name" value="Bovine Mitochondrial F1-atpase, Atp Synthase Beta Chain, Chain D, domain 3"/>
    <property type="match status" value="1"/>
</dbReference>
<dbReference type="Gene3D" id="3.40.50.300">
    <property type="entry name" value="P-loop containing nucleotide triphosphate hydrolases"/>
    <property type="match status" value="1"/>
</dbReference>
<dbReference type="HAMAP" id="MF_01347">
    <property type="entry name" value="ATP_synth_beta_bact"/>
    <property type="match status" value="1"/>
</dbReference>
<dbReference type="InterPro" id="IPR003593">
    <property type="entry name" value="AAA+_ATPase"/>
</dbReference>
<dbReference type="InterPro" id="IPR055190">
    <property type="entry name" value="ATP-synt_VA_C"/>
</dbReference>
<dbReference type="InterPro" id="IPR005722">
    <property type="entry name" value="ATP_synth_F1_bsu"/>
</dbReference>
<dbReference type="InterPro" id="IPR020003">
    <property type="entry name" value="ATPase_a/bsu_AS"/>
</dbReference>
<dbReference type="InterPro" id="IPR050053">
    <property type="entry name" value="ATPase_alpha/beta_chains"/>
</dbReference>
<dbReference type="InterPro" id="IPR004100">
    <property type="entry name" value="ATPase_F1/V1/A1_a/bsu_N"/>
</dbReference>
<dbReference type="InterPro" id="IPR036121">
    <property type="entry name" value="ATPase_F1/V1/A1_a/bsu_N_sf"/>
</dbReference>
<dbReference type="InterPro" id="IPR000194">
    <property type="entry name" value="ATPase_F1/V1/A1_a/bsu_nucl-bd"/>
</dbReference>
<dbReference type="InterPro" id="IPR024034">
    <property type="entry name" value="ATPase_F1/V1_b/a_C"/>
</dbReference>
<dbReference type="InterPro" id="IPR027417">
    <property type="entry name" value="P-loop_NTPase"/>
</dbReference>
<dbReference type="NCBIfam" id="TIGR01039">
    <property type="entry name" value="atpD"/>
    <property type="match status" value="1"/>
</dbReference>
<dbReference type="PANTHER" id="PTHR15184">
    <property type="entry name" value="ATP SYNTHASE"/>
    <property type="match status" value="1"/>
</dbReference>
<dbReference type="PANTHER" id="PTHR15184:SF71">
    <property type="entry name" value="ATP SYNTHASE SUBUNIT BETA, MITOCHONDRIAL"/>
    <property type="match status" value="1"/>
</dbReference>
<dbReference type="Pfam" id="PF00006">
    <property type="entry name" value="ATP-synt_ab"/>
    <property type="match status" value="1"/>
</dbReference>
<dbReference type="Pfam" id="PF02874">
    <property type="entry name" value="ATP-synt_ab_N"/>
    <property type="match status" value="1"/>
</dbReference>
<dbReference type="Pfam" id="PF22919">
    <property type="entry name" value="ATP-synt_VA_C"/>
    <property type="match status" value="1"/>
</dbReference>
<dbReference type="PIRSF" id="PIRSF039072">
    <property type="entry name" value="ATPase_subunit_beta"/>
    <property type="match status" value="1"/>
</dbReference>
<dbReference type="SMART" id="SM00382">
    <property type="entry name" value="AAA"/>
    <property type="match status" value="1"/>
</dbReference>
<dbReference type="SUPFAM" id="SSF47917">
    <property type="entry name" value="C-terminal domain of alpha and beta subunits of F1 ATP synthase"/>
    <property type="match status" value="1"/>
</dbReference>
<dbReference type="SUPFAM" id="SSF50615">
    <property type="entry name" value="N-terminal domain of alpha and beta subunits of F1 ATP synthase"/>
    <property type="match status" value="1"/>
</dbReference>
<dbReference type="SUPFAM" id="SSF52540">
    <property type="entry name" value="P-loop containing nucleoside triphosphate hydrolases"/>
    <property type="match status" value="1"/>
</dbReference>
<dbReference type="PROSITE" id="PS00152">
    <property type="entry name" value="ATPASE_ALPHA_BETA"/>
    <property type="match status" value="1"/>
</dbReference>